<reference key="1">
    <citation type="journal article" date="2009" name="Genome Res.">
        <title>Whole genome sequence of Desulfovibrio magneticus strain RS-1 revealed common gene clusters in magnetotactic bacteria.</title>
        <authorList>
            <person name="Nakazawa H."/>
            <person name="Arakaki A."/>
            <person name="Narita-Yamada S."/>
            <person name="Yashiro I."/>
            <person name="Jinno K."/>
            <person name="Aoki N."/>
            <person name="Tsuruyama A."/>
            <person name="Okamura Y."/>
            <person name="Tanikawa S."/>
            <person name="Fujita N."/>
            <person name="Takeyama H."/>
            <person name="Matsunaga T."/>
        </authorList>
    </citation>
    <scope>NUCLEOTIDE SEQUENCE [LARGE SCALE GENOMIC DNA]</scope>
    <source>
        <strain>ATCC 700980 / DSM 13731 / RS-1</strain>
    </source>
</reference>
<evidence type="ECO:0000250" key="1"/>
<evidence type="ECO:0000305" key="2"/>
<name>PYRDB_SOLM1</name>
<sequence>MSVDTSVRLPGMPVKNPVMTASGTFGYGLEFAPYGDLRSLGGIVVKGLSLAPRLGNPMPRIAETPCGMLNAIGLQNCGVEKFLRDKLPRLPWRETPIIANLYACDADEFAELAGVLSAEEGVAALEVNISCPNVKAGGIAFGQDPCMAGKLAEAVKKRAGDKPVWVKLSPNVTDIVSIARAAVLGGADALTCINTLTGMSVDIRSRKPRLANVIGGLSGPAIKPVALRAVWQVCQAVSAPVIGVGGISSAEDVLEFILVGAHAVQIGTANFMRPDMAFRIAERLPQLMAELGIEDLASYRGSLRVG</sequence>
<comment type="function">
    <text evidence="1">Catalyzes the conversion of dihydroorotate to orotate with NAD(+) as electron acceptor.</text>
</comment>
<comment type="catalytic activity">
    <reaction>
        <text>(S)-dihydroorotate + NAD(+) = orotate + NADH + H(+)</text>
        <dbReference type="Rhea" id="RHEA:13513"/>
        <dbReference type="ChEBI" id="CHEBI:15378"/>
        <dbReference type="ChEBI" id="CHEBI:30839"/>
        <dbReference type="ChEBI" id="CHEBI:30864"/>
        <dbReference type="ChEBI" id="CHEBI:57540"/>
        <dbReference type="ChEBI" id="CHEBI:57945"/>
        <dbReference type="EC" id="1.3.1.14"/>
    </reaction>
</comment>
<comment type="cofactor">
    <cofactor evidence="1">
        <name>FMN</name>
        <dbReference type="ChEBI" id="CHEBI:58210"/>
    </cofactor>
    <text evidence="1">Binds 1 FMN per subunit.</text>
</comment>
<comment type="pathway">
    <text>Pyrimidine metabolism; UMP biosynthesis via de novo pathway; orotate from (S)-dihydroorotate (NAD(+) route): step 1/1.</text>
</comment>
<comment type="subunit">
    <text evidence="1">Heterotetramer of 2 PyrK and 2 PyrD type B subunits.</text>
</comment>
<comment type="subcellular location">
    <subcellularLocation>
        <location evidence="1">Cytoplasm</location>
    </subcellularLocation>
</comment>
<comment type="similarity">
    <text evidence="2">Belongs to the dihydroorotate dehydrogenase family. Type 1 subfamily.</text>
</comment>
<protein>
    <recommendedName>
        <fullName>Dihydroorotate dehydrogenase B (NAD(+)), catalytic subunit</fullName>
        <shortName>DHOD B</shortName>
        <shortName>DHODase B</shortName>
        <shortName>DHOdehase B</shortName>
        <ecNumber>1.3.1.14</ecNumber>
    </recommendedName>
    <alternativeName>
        <fullName>Dihydroorotate oxidase B</fullName>
    </alternativeName>
    <alternativeName>
        <fullName>Orotate reductase (NADH)</fullName>
    </alternativeName>
</protein>
<organism>
    <name type="scientific">Solidesulfovibrio magneticus (strain ATCC 700980 / DSM 13731 / RS-1)</name>
    <name type="common">Desulfovibrio magneticus</name>
    <dbReference type="NCBI Taxonomy" id="573370"/>
    <lineage>
        <taxon>Bacteria</taxon>
        <taxon>Pseudomonadati</taxon>
        <taxon>Thermodesulfobacteriota</taxon>
        <taxon>Desulfovibrionia</taxon>
        <taxon>Desulfovibrionales</taxon>
        <taxon>Desulfovibrionaceae</taxon>
        <taxon>Solidesulfovibrio</taxon>
    </lineage>
</organism>
<gene>
    <name type="primary">pyrD</name>
    <name type="ordered locus">DMR_16260</name>
</gene>
<keyword id="KW-0963">Cytoplasm</keyword>
<keyword id="KW-0285">Flavoprotein</keyword>
<keyword id="KW-0288">FMN</keyword>
<keyword id="KW-0520">NAD</keyword>
<keyword id="KW-0560">Oxidoreductase</keyword>
<keyword id="KW-0665">Pyrimidine biosynthesis</keyword>
<dbReference type="EC" id="1.3.1.14"/>
<dbReference type="EMBL" id="AP010904">
    <property type="protein sequence ID" value="BAH75117.1"/>
    <property type="molecule type" value="Genomic_DNA"/>
</dbReference>
<dbReference type="RefSeq" id="WP_015860321.1">
    <property type="nucleotide sequence ID" value="NC_012796.1"/>
</dbReference>
<dbReference type="SMR" id="C4XPD6"/>
<dbReference type="STRING" id="573370.DMR_16260"/>
<dbReference type="KEGG" id="dma:DMR_16260"/>
<dbReference type="eggNOG" id="COG0167">
    <property type="taxonomic scope" value="Bacteria"/>
</dbReference>
<dbReference type="HOGENOM" id="CLU_042042_0_0_7"/>
<dbReference type="OrthoDB" id="9802377at2"/>
<dbReference type="UniPathway" id="UPA00070">
    <property type="reaction ID" value="UER00945"/>
</dbReference>
<dbReference type="Proteomes" id="UP000009071">
    <property type="component" value="Chromosome"/>
</dbReference>
<dbReference type="GO" id="GO:0005737">
    <property type="term" value="C:cytoplasm"/>
    <property type="evidence" value="ECO:0007669"/>
    <property type="project" value="UniProtKB-SubCell"/>
</dbReference>
<dbReference type="GO" id="GO:0004589">
    <property type="term" value="F:dihydroorotate dehydrogenase (NAD+) activity"/>
    <property type="evidence" value="ECO:0007669"/>
    <property type="project" value="UniProtKB-EC"/>
</dbReference>
<dbReference type="GO" id="GO:0006207">
    <property type="term" value="P:'de novo' pyrimidine nucleobase biosynthetic process"/>
    <property type="evidence" value="ECO:0007669"/>
    <property type="project" value="InterPro"/>
</dbReference>
<dbReference type="GO" id="GO:0044205">
    <property type="term" value="P:'de novo' UMP biosynthetic process"/>
    <property type="evidence" value="ECO:0007669"/>
    <property type="project" value="UniProtKB-UniRule"/>
</dbReference>
<dbReference type="CDD" id="cd04740">
    <property type="entry name" value="DHOD_1B_like"/>
    <property type="match status" value="1"/>
</dbReference>
<dbReference type="FunFam" id="3.20.20.70:FF:000027">
    <property type="entry name" value="Dihydropyrimidine dehydrogenase [NADP(+)]"/>
    <property type="match status" value="1"/>
</dbReference>
<dbReference type="Gene3D" id="3.20.20.70">
    <property type="entry name" value="Aldolase class I"/>
    <property type="match status" value="1"/>
</dbReference>
<dbReference type="HAMAP" id="MF_00224">
    <property type="entry name" value="DHO_dh_type1"/>
    <property type="match status" value="1"/>
</dbReference>
<dbReference type="InterPro" id="IPR013785">
    <property type="entry name" value="Aldolase_TIM"/>
</dbReference>
<dbReference type="InterPro" id="IPR050074">
    <property type="entry name" value="DHO_dehydrogenase"/>
</dbReference>
<dbReference type="InterPro" id="IPR033888">
    <property type="entry name" value="DHOD_1B"/>
</dbReference>
<dbReference type="InterPro" id="IPR024920">
    <property type="entry name" value="Dihydroorotate_DH_1"/>
</dbReference>
<dbReference type="InterPro" id="IPR012135">
    <property type="entry name" value="Dihydroorotate_DH_1_2"/>
</dbReference>
<dbReference type="InterPro" id="IPR005720">
    <property type="entry name" value="Dihydroorotate_DH_cat"/>
</dbReference>
<dbReference type="InterPro" id="IPR001295">
    <property type="entry name" value="Dihydroorotate_DH_CS"/>
</dbReference>
<dbReference type="InterPro" id="IPR049622">
    <property type="entry name" value="Dihydroorotate_DH_I"/>
</dbReference>
<dbReference type="NCBIfam" id="NF005574">
    <property type="entry name" value="PRK07259.1"/>
    <property type="match status" value="1"/>
</dbReference>
<dbReference type="NCBIfam" id="TIGR01037">
    <property type="entry name" value="pyrD_sub1_fam"/>
    <property type="match status" value="1"/>
</dbReference>
<dbReference type="PANTHER" id="PTHR48109:SF1">
    <property type="entry name" value="DIHYDROOROTATE DEHYDROGENASE (FUMARATE)"/>
    <property type="match status" value="1"/>
</dbReference>
<dbReference type="PANTHER" id="PTHR48109">
    <property type="entry name" value="DIHYDROOROTATE DEHYDROGENASE (QUINONE), MITOCHONDRIAL-RELATED"/>
    <property type="match status" value="1"/>
</dbReference>
<dbReference type="Pfam" id="PF01180">
    <property type="entry name" value="DHO_dh"/>
    <property type="match status" value="1"/>
</dbReference>
<dbReference type="PIRSF" id="PIRSF000164">
    <property type="entry name" value="DHO_oxidase"/>
    <property type="match status" value="1"/>
</dbReference>
<dbReference type="SUPFAM" id="SSF51395">
    <property type="entry name" value="FMN-linked oxidoreductases"/>
    <property type="match status" value="1"/>
</dbReference>
<dbReference type="PROSITE" id="PS00911">
    <property type="entry name" value="DHODEHASE_1"/>
    <property type="match status" value="1"/>
</dbReference>
<dbReference type="PROSITE" id="PS00912">
    <property type="entry name" value="DHODEHASE_2"/>
    <property type="match status" value="1"/>
</dbReference>
<feature type="chain" id="PRO_1000204304" description="Dihydroorotate dehydrogenase B (NAD(+)), catalytic subunit">
    <location>
        <begin position="1"/>
        <end position="306"/>
    </location>
</feature>
<feature type="active site" description="Nucleophile">
    <location>
        <position position="131"/>
    </location>
</feature>
<feature type="binding site" evidence="1">
    <location>
        <position position="22"/>
    </location>
    <ligand>
        <name>FMN</name>
        <dbReference type="ChEBI" id="CHEBI:58210"/>
    </ligand>
</feature>
<feature type="binding site" evidence="1">
    <location>
        <begin position="46"/>
        <end position="47"/>
    </location>
    <ligand>
        <name>FMN</name>
        <dbReference type="ChEBI" id="CHEBI:58210"/>
    </ligand>
</feature>
<feature type="binding site" evidence="1">
    <location>
        <position position="46"/>
    </location>
    <ligand>
        <name>substrate</name>
    </ligand>
</feature>
<feature type="binding site" evidence="1">
    <location>
        <begin position="70"/>
        <end position="74"/>
    </location>
    <ligand>
        <name>substrate</name>
    </ligand>
</feature>
<feature type="binding site" evidence="1">
    <location>
        <position position="100"/>
    </location>
    <ligand>
        <name>FMN</name>
        <dbReference type="ChEBI" id="CHEBI:58210"/>
    </ligand>
</feature>
<feature type="binding site" evidence="1">
    <location>
        <position position="128"/>
    </location>
    <ligand>
        <name>FMN</name>
        <dbReference type="ChEBI" id="CHEBI:58210"/>
    </ligand>
</feature>
<feature type="binding site" evidence="1">
    <location>
        <position position="128"/>
    </location>
    <ligand>
        <name>substrate</name>
    </ligand>
</feature>
<feature type="binding site" evidence="1">
    <location>
        <position position="167"/>
    </location>
    <ligand>
        <name>FMN</name>
        <dbReference type="ChEBI" id="CHEBI:58210"/>
    </ligand>
</feature>
<feature type="binding site" evidence="1">
    <location>
        <position position="193"/>
    </location>
    <ligand>
        <name>FMN</name>
        <dbReference type="ChEBI" id="CHEBI:58210"/>
    </ligand>
</feature>
<feature type="binding site" evidence="1">
    <location>
        <begin position="194"/>
        <end position="195"/>
    </location>
    <ligand>
        <name>substrate</name>
    </ligand>
</feature>
<feature type="binding site" evidence="1">
    <location>
        <position position="219"/>
    </location>
    <ligand>
        <name>FMN</name>
        <dbReference type="ChEBI" id="CHEBI:58210"/>
    </ligand>
</feature>
<feature type="binding site" evidence="1">
    <location>
        <begin position="245"/>
        <end position="246"/>
    </location>
    <ligand>
        <name>FMN</name>
        <dbReference type="ChEBI" id="CHEBI:58210"/>
    </ligand>
</feature>
<feature type="binding site" evidence="1">
    <location>
        <begin position="267"/>
        <end position="268"/>
    </location>
    <ligand>
        <name>FMN</name>
        <dbReference type="ChEBI" id="CHEBI:58210"/>
    </ligand>
</feature>
<accession>C4XPD6</accession>
<proteinExistence type="inferred from homology"/>